<evidence type="ECO:0000255" key="1">
    <source>
        <dbReference type="HAMAP-Rule" id="MF_00719"/>
    </source>
</evidence>
<proteinExistence type="inferred from homology"/>
<feature type="chain" id="PRO_1000212702" description="Adenosylcobinamide-GDP ribazoletransferase">
    <location>
        <begin position="1"/>
        <end position="233"/>
    </location>
</feature>
<feature type="transmembrane region" description="Helical" evidence="1">
    <location>
        <begin position="24"/>
        <end position="44"/>
    </location>
</feature>
<feature type="transmembrane region" description="Helical" evidence="1">
    <location>
        <begin position="46"/>
        <end position="66"/>
    </location>
</feature>
<feature type="transmembrane region" description="Helical" evidence="1">
    <location>
        <begin position="96"/>
        <end position="116"/>
    </location>
</feature>
<feature type="transmembrane region" description="Helical" evidence="1">
    <location>
        <begin position="117"/>
        <end position="137"/>
    </location>
</feature>
<feature type="transmembrane region" description="Helical" evidence="1">
    <location>
        <begin position="158"/>
        <end position="178"/>
    </location>
</feature>
<feature type="transmembrane region" description="Helical" evidence="1">
    <location>
        <begin position="181"/>
        <end position="198"/>
    </location>
</feature>
<feature type="transmembrane region" description="Helical" evidence="1">
    <location>
        <begin position="209"/>
        <end position="229"/>
    </location>
</feature>
<name>COBS_THEGJ</name>
<accession>C5A478</accession>
<keyword id="KW-1003">Cell membrane</keyword>
<keyword id="KW-0169">Cobalamin biosynthesis</keyword>
<keyword id="KW-0460">Magnesium</keyword>
<keyword id="KW-0472">Membrane</keyword>
<keyword id="KW-1185">Reference proteome</keyword>
<keyword id="KW-0808">Transferase</keyword>
<keyword id="KW-0812">Transmembrane</keyword>
<keyword id="KW-1133">Transmembrane helix</keyword>
<organism>
    <name type="scientific">Thermococcus gammatolerans (strain DSM 15229 / JCM 11827 / EJ3)</name>
    <dbReference type="NCBI Taxonomy" id="593117"/>
    <lineage>
        <taxon>Archaea</taxon>
        <taxon>Methanobacteriati</taxon>
        <taxon>Methanobacteriota</taxon>
        <taxon>Thermococci</taxon>
        <taxon>Thermococcales</taxon>
        <taxon>Thermococcaceae</taxon>
        <taxon>Thermococcus</taxon>
    </lineage>
</organism>
<sequence length="233" mass="25338">MRNLLPFFTRIPVKGDFERVRNELWALPLLAPLTSALATLVLYLELPLSNVLAILALYFTTGLLHLDGLADWADGVMVKGDRERKIKAMKDLNTGIAGVFAVVMVFLLQVYSLPLLPFYALYLAELNSKFAMLLALATRKPLGQGLGAYFMEGMNGRQLTLGTALYLLLLLPVAYIEPRSISSLLGLLAGAYVIRLSLRNFGGLNGDCIGAVAEITRAGALLGMAVVWVYFGG</sequence>
<comment type="function">
    <text evidence="1">Joins adenosylcobinamide-GDP and alpha-ribazole to generate adenosylcobalamin (Ado-cobalamin). Also synthesizes adenosylcobalamin 5'-phosphate from adenosylcobinamide-GDP and alpha-ribazole 5'-phosphate.</text>
</comment>
<comment type="catalytic activity">
    <reaction evidence="1">
        <text>alpha-ribazole + adenosylcob(III)inamide-GDP = adenosylcob(III)alamin + GMP + H(+)</text>
        <dbReference type="Rhea" id="RHEA:16049"/>
        <dbReference type="ChEBI" id="CHEBI:10329"/>
        <dbReference type="ChEBI" id="CHEBI:15378"/>
        <dbReference type="ChEBI" id="CHEBI:18408"/>
        <dbReference type="ChEBI" id="CHEBI:58115"/>
        <dbReference type="ChEBI" id="CHEBI:60487"/>
        <dbReference type="EC" id="2.7.8.26"/>
    </reaction>
</comment>
<comment type="catalytic activity">
    <reaction evidence="1">
        <text>alpha-ribazole 5'-phosphate + adenosylcob(III)inamide-GDP = adenosylcob(III)alamin 5'-phosphate + GMP + H(+)</text>
        <dbReference type="Rhea" id="RHEA:23560"/>
        <dbReference type="ChEBI" id="CHEBI:15378"/>
        <dbReference type="ChEBI" id="CHEBI:57918"/>
        <dbReference type="ChEBI" id="CHEBI:58115"/>
        <dbReference type="ChEBI" id="CHEBI:60487"/>
        <dbReference type="ChEBI" id="CHEBI:60493"/>
        <dbReference type="EC" id="2.7.8.26"/>
    </reaction>
</comment>
<comment type="cofactor">
    <cofactor evidence="1">
        <name>Mg(2+)</name>
        <dbReference type="ChEBI" id="CHEBI:18420"/>
    </cofactor>
</comment>
<comment type="pathway">
    <text evidence="1">Cofactor biosynthesis; adenosylcobalamin biosynthesis; adenosylcobalamin from cob(II)yrinate a,c-diamide: step 7/7.</text>
</comment>
<comment type="subcellular location">
    <subcellularLocation>
        <location evidence="1">Cell membrane</location>
        <topology evidence="1">Multi-pass membrane protein</topology>
    </subcellularLocation>
</comment>
<comment type="similarity">
    <text evidence="1">Belongs to the CobS family.</text>
</comment>
<reference key="1">
    <citation type="journal article" date="2007" name="Genome Biol.">
        <title>Genome analysis and genome-wide proteomics of Thermococcus gammatolerans, the most radioresistant organism known amongst the Archaea.</title>
        <authorList>
            <person name="Zivanovic Y."/>
            <person name="Armengaud J."/>
            <person name="Lagorce A."/>
            <person name="Leplat C."/>
            <person name="Guerin P."/>
            <person name="Dutertre M."/>
            <person name="Anthouard V."/>
            <person name="Forterre P."/>
            <person name="Wincker P."/>
            <person name="Confalonieri F."/>
        </authorList>
    </citation>
    <scope>NUCLEOTIDE SEQUENCE [LARGE SCALE GENOMIC DNA]</scope>
    <source>
        <strain>DSM 15229 / JCM 11827 / EJ3</strain>
    </source>
</reference>
<dbReference type="EC" id="2.7.8.26" evidence="1"/>
<dbReference type="EMBL" id="CP001398">
    <property type="protein sequence ID" value="ACS33040.1"/>
    <property type="molecule type" value="Genomic_DNA"/>
</dbReference>
<dbReference type="RefSeq" id="WP_015858158.1">
    <property type="nucleotide sequence ID" value="NC_012804.1"/>
</dbReference>
<dbReference type="STRING" id="593117.TGAM_0538"/>
<dbReference type="PaxDb" id="593117-TGAM_0538"/>
<dbReference type="GeneID" id="7987406"/>
<dbReference type="KEGG" id="tga:TGAM_0538"/>
<dbReference type="PATRIC" id="fig|593117.10.peg.536"/>
<dbReference type="eggNOG" id="arCOG04338">
    <property type="taxonomic scope" value="Archaea"/>
</dbReference>
<dbReference type="HOGENOM" id="CLU_057426_2_0_2"/>
<dbReference type="OrthoDB" id="11748at2157"/>
<dbReference type="UniPathway" id="UPA00148">
    <property type="reaction ID" value="UER00238"/>
</dbReference>
<dbReference type="Proteomes" id="UP000001488">
    <property type="component" value="Chromosome"/>
</dbReference>
<dbReference type="GO" id="GO:0005886">
    <property type="term" value="C:plasma membrane"/>
    <property type="evidence" value="ECO:0007669"/>
    <property type="project" value="UniProtKB-SubCell"/>
</dbReference>
<dbReference type="GO" id="GO:0051073">
    <property type="term" value="F:adenosylcobinamide-GDP ribazoletransferase activity"/>
    <property type="evidence" value="ECO:0007669"/>
    <property type="project" value="UniProtKB-UniRule"/>
</dbReference>
<dbReference type="GO" id="GO:0008818">
    <property type="term" value="F:cobalamin 5'-phosphate synthase activity"/>
    <property type="evidence" value="ECO:0007669"/>
    <property type="project" value="UniProtKB-UniRule"/>
</dbReference>
<dbReference type="GO" id="GO:0009236">
    <property type="term" value="P:cobalamin biosynthetic process"/>
    <property type="evidence" value="ECO:0007669"/>
    <property type="project" value="UniProtKB-UniRule"/>
</dbReference>
<dbReference type="HAMAP" id="MF_00719">
    <property type="entry name" value="CobS"/>
    <property type="match status" value="1"/>
</dbReference>
<dbReference type="InterPro" id="IPR003805">
    <property type="entry name" value="CobS"/>
</dbReference>
<dbReference type="NCBIfam" id="TIGR00317">
    <property type="entry name" value="cobS"/>
    <property type="match status" value="1"/>
</dbReference>
<dbReference type="PANTHER" id="PTHR34148">
    <property type="entry name" value="ADENOSYLCOBINAMIDE-GDP RIBAZOLETRANSFERASE"/>
    <property type="match status" value="1"/>
</dbReference>
<dbReference type="PANTHER" id="PTHR34148:SF1">
    <property type="entry name" value="ADENOSYLCOBINAMIDE-GDP RIBAZOLETRANSFERASE"/>
    <property type="match status" value="1"/>
</dbReference>
<dbReference type="Pfam" id="PF02654">
    <property type="entry name" value="CobS"/>
    <property type="match status" value="1"/>
</dbReference>
<protein>
    <recommendedName>
        <fullName evidence="1">Adenosylcobinamide-GDP ribazoletransferase</fullName>
        <ecNumber evidence="1">2.7.8.26</ecNumber>
    </recommendedName>
    <alternativeName>
        <fullName evidence="1">Cobalamin synthase</fullName>
    </alternativeName>
    <alternativeName>
        <fullName evidence="1">Cobalamin-5'-phosphate synthase</fullName>
    </alternativeName>
</protein>
<gene>
    <name evidence="1" type="primary">cobS</name>
    <name type="ordered locus">TGAM_0538</name>
</gene>